<comment type="function">
    <text evidence="6">Snake venom zinc metalloprotease that hydrolyzes the alpha-chain (FGA) and more slowly the beta-chain (FGB) of fibrinogen. Inhibits cell proliferation and induces cell morphologic changes transiently on human umbilical vein endothelial cells.</text>
</comment>
<comment type="cofactor">
    <cofactor evidence="1">
        <name>Zn(2+)</name>
        <dbReference type="ChEBI" id="CHEBI:29105"/>
    </cofactor>
    <text evidence="1">Binds 1 zinc ion per subunit.</text>
</comment>
<comment type="activity regulation">
    <text evidence="6">Inhibited by EDTA and DTT, and partially inhibited by EGTA, but not inhibited by PMSF and NEM.</text>
</comment>
<comment type="biophysicochemical properties">
    <kinetics>
        <KM evidence="7">25 uM for NFF-2 (fluorogenic substrates with cleavage at Ala-Nva)</KM>
    </kinetics>
</comment>
<comment type="subunit">
    <text evidence="9">Homodimer; disulfide-linked.</text>
</comment>
<comment type="subcellular location">
    <subcellularLocation>
        <location>Secreted</location>
    </subcellularLocation>
</comment>
<comment type="tissue specificity">
    <text>Expressed by the venom gland.</text>
</comment>
<comment type="PTM">
    <text evidence="6">The N-terminus is blocked.</text>
</comment>
<comment type="miscellaneous">
    <text evidence="9">Negative results: does not affect gamma-chain of fibrinogen (FGG). Does not show apoptosis effects (PubMed:16487560).</text>
</comment>
<comment type="similarity">
    <text evidence="8">Belongs to the venom metalloproteinase (M12B) family. P-III subfamily. P-IIIc sub-subfamily.</text>
</comment>
<evidence type="ECO:0000250" key="1"/>
<evidence type="ECO:0000255" key="2"/>
<evidence type="ECO:0000255" key="3">
    <source>
        <dbReference type="PROSITE-ProRule" id="PRU00068"/>
    </source>
</evidence>
<evidence type="ECO:0000255" key="4">
    <source>
        <dbReference type="PROSITE-ProRule" id="PRU00276"/>
    </source>
</evidence>
<evidence type="ECO:0000255" key="5">
    <source>
        <dbReference type="PROSITE-ProRule" id="PRU10095"/>
    </source>
</evidence>
<evidence type="ECO:0000269" key="6">
    <source>
    </source>
</evidence>
<evidence type="ECO:0000269" key="7">
    <source>
    </source>
</evidence>
<evidence type="ECO:0000305" key="8"/>
<evidence type="ECO:0000305" key="9">
    <source>
    </source>
</evidence>
<protein>
    <recommendedName>
        <fullName>Zinc metalloproteinase-disintegrin-like TSV-DM</fullName>
        <ecNumber>3.4.24.-</ecNumber>
    </recommendedName>
    <alternativeName>
        <fullName>Snake venom metalloproteinase</fullName>
        <shortName>SVMP</shortName>
    </alternativeName>
</protein>
<feature type="signal peptide" evidence="2">
    <location>
        <begin position="1"/>
        <end position="20"/>
    </location>
</feature>
<feature type="propeptide" id="PRO_0000340310" evidence="1">
    <location>
        <begin position="21"/>
        <end position="191"/>
    </location>
</feature>
<feature type="chain" id="PRO_0000340311" description="Zinc metalloproteinase-disintegrin-like TSV-DM">
    <location>
        <begin position="192"/>
        <end position="621"/>
    </location>
</feature>
<feature type="domain" description="Peptidase M12B" evidence="4">
    <location>
        <begin position="200"/>
        <end position="396"/>
    </location>
</feature>
<feature type="domain" description="Disintegrin" evidence="3">
    <location>
        <begin position="404"/>
        <end position="489"/>
    </location>
</feature>
<feature type="short sequence motif" description="D/ECD-tripeptide">
    <location>
        <begin position="468"/>
        <end position="470"/>
    </location>
</feature>
<feature type="active site" evidence="4 5">
    <location>
        <position position="337"/>
    </location>
</feature>
<feature type="binding site" evidence="1">
    <location>
        <position position="336"/>
    </location>
    <ligand>
        <name>Zn(2+)</name>
        <dbReference type="ChEBI" id="CHEBI:29105"/>
        <note>catalytic</note>
    </ligand>
</feature>
<feature type="binding site" evidence="1">
    <location>
        <position position="340"/>
    </location>
    <ligand>
        <name>Zn(2+)</name>
        <dbReference type="ChEBI" id="CHEBI:29105"/>
        <note>catalytic</note>
    </ligand>
</feature>
<feature type="binding site" evidence="1">
    <location>
        <position position="346"/>
    </location>
    <ligand>
        <name>Zn(2+)</name>
        <dbReference type="ChEBI" id="CHEBI:29105"/>
        <note>catalytic</note>
    </ligand>
</feature>
<feature type="binding site" evidence="1">
    <location>
        <position position="406"/>
    </location>
    <ligand>
        <name>Ca(2+)</name>
        <dbReference type="ChEBI" id="CHEBI:29108"/>
        <label>1</label>
    </ligand>
</feature>
<feature type="binding site" evidence="1">
    <location>
        <position position="409"/>
    </location>
    <ligand>
        <name>Ca(2+)</name>
        <dbReference type="ChEBI" id="CHEBI:29108"/>
        <label>1</label>
    </ligand>
</feature>
<feature type="binding site" evidence="1">
    <location>
        <position position="411"/>
    </location>
    <ligand>
        <name>Ca(2+)</name>
        <dbReference type="ChEBI" id="CHEBI:29108"/>
        <label>1</label>
    </ligand>
</feature>
<feature type="binding site" evidence="1">
    <location>
        <position position="413"/>
    </location>
    <ligand>
        <name>Ca(2+)</name>
        <dbReference type="ChEBI" id="CHEBI:29108"/>
        <label>1</label>
    </ligand>
</feature>
<feature type="binding site" evidence="1">
    <location>
        <position position="416"/>
    </location>
    <ligand>
        <name>Ca(2+)</name>
        <dbReference type="ChEBI" id="CHEBI:29108"/>
        <label>1</label>
    </ligand>
</feature>
<feature type="binding site" evidence="1">
    <location>
        <position position="419"/>
    </location>
    <ligand>
        <name>Ca(2+)</name>
        <dbReference type="ChEBI" id="CHEBI:29108"/>
        <label>1</label>
    </ligand>
</feature>
<feature type="binding site" evidence="1">
    <location>
        <position position="470"/>
    </location>
    <ligand>
        <name>Ca(2+)</name>
        <dbReference type="ChEBI" id="CHEBI:29108"/>
        <label>2</label>
    </ligand>
</feature>
<feature type="binding site" evidence="1">
    <location>
        <position position="471"/>
    </location>
    <ligand>
        <name>Ca(2+)</name>
        <dbReference type="ChEBI" id="CHEBI:29108"/>
        <label>2</label>
    </ligand>
</feature>
<feature type="binding site" evidence="1">
    <location>
        <position position="473"/>
    </location>
    <ligand>
        <name>Ca(2+)</name>
        <dbReference type="ChEBI" id="CHEBI:29108"/>
        <label>2</label>
    </ligand>
</feature>
<feature type="binding site" evidence="1">
    <location>
        <position position="484"/>
    </location>
    <ligand>
        <name>Ca(2+)</name>
        <dbReference type="ChEBI" id="CHEBI:29108"/>
        <label>2</label>
    </ligand>
</feature>
<feature type="binding site" evidence="1">
    <location>
        <position position="485"/>
    </location>
    <ligand>
        <name>Ca(2+)</name>
        <dbReference type="ChEBI" id="CHEBI:29108"/>
        <label>2</label>
    </ligand>
</feature>
<feature type="modified residue" description="Pyrrolidone carboxylic acid" evidence="9">
    <location>
        <position position="192"/>
    </location>
</feature>
<feature type="glycosylation site" description="N-linked (GlcNAc...) asparagine" evidence="2">
    <location>
        <position position="219"/>
    </location>
</feature>
<feature type="glycosylation site" description="N-linked (GlcNAc...) asparagine" evidence="2">
    <location>
        <position position="502"/>
    </location>
</feature>
<feature type="disulfide bond" evidence="1">
    <location>
        <begin position="311"/>
        <end position="391"/>
    </location>
</feature>
<feature type="disulfide bond" evidence="1">
    <location>
        <begin position="351"/>
        <end position="375"/>
    </location>
</feature>
<feature type="disulfide bond" evidence="1">
    <location>
        <begin position="353"/>
        <end position="358"/>
    </location>
</feature>
<feature type="disulfide bond" description="Interchain (with C-366)" evidence="3 4">
    <location>
        <position position="366"/>
    </location>
</feature>
<feature type="disulfide bond" evidence="1">
    <location>
        <begin position="407"/>
        <end position="436"/>
    </location>
</feature>
<feature type="disulfide bond" evidence="1">
    <location>
        <begin position="418"/>
        <end position="431"/>
    </location>
</feature>
<feature type="disulfide bond" evidence="1">
    <location>
        <begin position="420"/>
        <end position="426"/>
    </location>
</feature>
<feature type="disulfide bond" evidence="1">
    <location>
        <begin position="430"/>
        <end position="453"/>
    </location>
</feature>
<feature type="disulfide bond" evidence="1">
    <location>
        <begin position="444"/>
        <end position="450"/>
    </location>
</feature>
<feature type="disulfide bond" evidence="1">
    <location>
        <begin position="449"/>
        <end position="475"/>
    </location>
</feature>
<feature type="disulfide bond" evidence="1">
    <location>
        <begin position="462"/>
        <end position="482"/>
    </location>
</feature>
<feature type="disulfide bond" evidence="1">
    <location>
        <begin position="469"/>
        <end position="500"/>
    </location>
</feature>
<feature type="disulfide bond" evidence="1">
    <location>
        <begin position="493"/>
        <end position="505"/>
    </location>
</feature>
<feature type="disulfide bond" evidence="1">
    <location>
        <begin position="512"/>
        <end position="562"/>
    </location>
</feature>
<feature type="disulfide bond" evidence="1">
    <location>
        <begin position="527"/>
        <end position="573"/>
    </location>
</feature>
<feature type="disulfide bond" evidence="1">
    <location>
        <begin position="540"/>
        <end position="550"/>
    </location>
</feature>
<feature type="disulfide bond" evidence="1">
    <location>
        <begin position="557"/>
        <end position="599"/>
    </location>
</feature>
<feature type="disulfide bond" evidence="1">
    <location>
        <begin position="593"/>
        <end position="605"/>
    </location>
</feature>
<dbReference type="EC" id="3.4.24.-"/>
<dbReference type="EMBL" id="DQ335449">
    <property type="protein sequence ID" value="ABC73079.1"/>
    <property type="molecule type" value="mRNA"/>
</dbReference>
<dbReference type="SMR" id="Q2LD49"/>
<dbReference type="MEROPS" id="M12.315"/>
<dbReference type="GO" id="GO:0005576">
    <property type="term" value="C:extracellular region"/>
    <property type="evidence" value="ECO:0007669"/>
    <property type="project" value="UniProtKB-SubCell"/>
</dbReference>
<dbReference type="GO" id="GO:0005886">
    <property type="term" value="C:plasma membrane"/>
    <property type="evidence" value="ECO:0007669"/>
    <property type="project" value="TreeGrafter"/>
</dbReference>
<dbReference type="GO" id="GO:0046872">
    <property type="term" value="F:metal ion binding"/>
    <property type="evidence" value="ECO:0007669"/>
    <property type="project" value="UniProtKB-KW"/>
</dbReference>
<dbReference type="GO" id="GO:0004222">
    <property type="term" value="F:metalloendopeptidase activity"/>
    <property type="evidence" value="ECO:0007669"/>
    <property type="project" value="InterPro"/>
</dbReference>
<dbReference type="GO" id="GO:0090729">
    <property type="term" value="F:toxin activity"/>
    <property type="evidence" value="ECO:0007669"/>
    <property type="project" value="UniProtKB-KW"/>
</dbReference>
<dbReference type="GO" id="GO:0006508">
    <property type="term" value="P:proteolysis"/>
    <property type="evidence" value="ECO:0007669"/>
    <property type="project" value="UniProtKB-KW"/>
</dbReference>
<dbReference type="CDD" id="cd04269">
    <property type="entry name" value="ZnMc_adamalysin_II_like"/>
    <property type="match status" value="1"/>
</dbReference>
<dbReference type="FunFam" id="3.40.390.10:FF:000002">
    <property type="entry name" value="Disintegrin and metalloproteinase domain-containing protein 22"/>
    <property type="match status" value="1"/>
</dbReference>
<dbReference type="FunFam" id="4.10.70.10:FF:000001">
    <property type="entry name" value="Disintegrin and metalloproteinase domain-containing protein 22"/>
    <property type="match status" value="1"/>
</dbReference>
<dbReference type="Gene3D" id="3.40.390.10">
    <property type="entry name" value="Collagenase (Catalytic Domain)"/>
    <property type="match status" value="1"/>
</dbReference>
<dbReference type="Gene3D" id="4.10.70.10">
    <property type="entry name" value="Disintegrin domain"/>
    <property type="match status" value="1"/>
</dbReference>
<dbReference type="InterPro" id="IPR006586">
    <property type="entry name" value="ADAM_Cys-rich"/>
</dbReference>
<dbReference type="InterPro" id="IPR018358">
    <property type="entry name" value="Disintegrin_CS"/>
</dbReference>
<dbReference type="InterPro" id="IPR001762">
    <property type="entry name" value="Disintegrin_dom"/>
</dbReference>
<dbReference type="InterPro" id="IPR036436">
    <property type="entry name" value="Disintegrin_dom_sf"/>
</dbReference>
<dbReference type="InterPro" id="IPR024079">
    <property type="entry name" value="MetalloPept_cat_dom_sf"/>
</dbReference>
<dbReference type="InterPro" id="IPR001590">
    <property type="entry name" value="Peptidase_M12B"/>
</dbReference>
<dbReference type="InterPro" id="IPR002870">
    <property type="entry name" value="Peptidase_M12B_N"/>
</dbReference>
<dbReference type="InterPro" id="IPR034027">
    <property type="entry name" value="Reprolysin_adamalysin"/>
</dbReference>
<dbReference type="PANTHER" id="PTHR11905">
    <property type="entry name" value="ADAM A DISINTEGRIN AND METALLOPROTEASE DOMAIN"/>
    <property type="match status" value="1"/>
</dbReference>
<dbReference type="PANTHER" id="PTHR11905:SF32">
    <property type="entry name" value="DISINTEGRIN AND METALLOPROTEINASE DOMAIN-CONTAINING PROTEIN 28"/>
    <property type="match status" value="1"/>
</dbReference>
<dbReference type="Pfam" id="PF08516">
    <property type="entry name" value="ADAM_CR"/>
    <property type="match status" value="1"/>
</dbReference>
<dbReference type="Pfam" id="PF00200">
    <property type="entry name" value="Disintegrin"/>
    <property type="match status" value="1"/>
</dbReference>
<dbReference type="Pfam" id="PF01562">
    <property type="entry name" value="Pep_M12B_propep"/>
    <property type="match status" value="1"/>
</dbReference>
<dbReference type="Pfam" id="PF01421">
    <property type="entry name" value="Reprolysin"/>
    <property type="match status" value="1"/>
</dbReference>
<dbReference type="PRINTS" id="PR00289">
    <property type="entry name" value="DISINTEGRIN"/>
</dbReference>
<dbReference type="SMART" id="SM00608">
    <property type="entry name" value="ACR"/>
    <property type="match status" value="1"/>
</dbReference>
<dbReference type="SMART" id="SM00050">
    <property type="entry name" value="DISIN"/>
    <property type="match status" value="1"/>
</dbReference>
<dbReference type="SUPFAM" id="SSF57552">
    <property type="entry name" value="Blood coagulation inhibitor (disintegrin)"/>
    <property type="match status" value="1"/>
</dbReference>
<dbReference type="SUPFAM" id="SSF55486">
    <property type="entry name" value="Metalloproteases ('zincins'), catalytic domain"/>
    <property type="match status" value="1"/>
</dbReference>
<dbReference type="PROSITE" id="PS50215">
    <property type="entry name" value="ADAM_MEPRO"/>
    <property type="match status" value="1"/>
</dbReference>
<dbReference type="PROSITE" id="PS00427">
    <property type="entry name" value="DISINTEGRIN_1"/>
    <property type="match status" value="1"/>
</dbReference>
<dbReference type="PROSITE" id="PS50214">
    <property type="entry name" value="DISINTEGRIN_2"/>
    <property type="match status" value="1"/>
</dbReference>
<dbReference type="PROSITE" id="PS00142">
    <property type="entry name" value="ZINC_PROTEASE"/>
    <property type="match status" value="1"/>
</dbReference>
<organism>
    <name type="scientific">Trimeresurus stejnegeri</name>
    <name type="common">Chinese green tree viper</name>
    <name type="synonym">Viridovipera stejnegeri</name>
    <dbReference type="NCBI Taxonomy" id="39682"/>
    <lineage>
        <taxon>Eukaryota</taxon>
        <taxon>Metazoa</taxon>
        <taxon>Chordata</taxon>
        <taxon>Craniata</taxon>
        <taxon>Vertebrata</taxon>
        <taxon>Euteleostomi</taxon>
        <taxon>Lepidosauria</taxon>
        <taxon>Squamata</taxon>
        <taxon>Bifurcata</taxon>
        <taxon>Unidentata</taxon>
        <taxon>Episquamata</taxon>
        <taxon>Toxicofera</taxon>
        <taxon>Serpentes</taxon>
        <taxon>Colubroidea</taxon>
        <taxon>Viperidae</taxon>
        <taxon>Crotalinae</taxon>
        <taxon>Trimeresurus</taxon>
    </lineage>
</organism>
<keyword id="KW-0106">Calcium</keyword>
<keyword id="KW-1217">Cell adhesion impairing toxin</keyword>
<keyword id="KW-0903">Direct protein sequencing</keyword>
<keyword id="KW-1015">Disulfide bond</keyword>
<keyword id="KW-1206">Fibrinogenolytic toxin</keyword>
<keyword id="KW-0325">Glycoprotein</keyword>
<keyword id="KW-1199">Hemostasis impairing toxin</keyword>
<keyword id="KW-0378">Hydrolase</keyword>
<keyword id="KW-0479">Metal-binding</keyword>
<keyword id="KW-0482">Metalloprotease</keyword>
<keyword id="KW-0645">Protease</keyword>
<keyword id="KW-0873">Pyrrolidone carboxylic acid</keyword>
<keyword id="KW-0964">Secreted</keyword>
<keyword id="KW-0732">Signal</keyword>
<keyword id="KW-0800">Toxin</keyword>
<keyword id="KW-0862">Zinc</keyword>
<keyword id="KW-0865">Zymogen</keyword>
<proteinExistence type="evidence at protein level"/>
<name>VM3TM_TRIST</name>
<reference key="1">
    <citation type="journal article" date="2006" name="Toxicon">
        <title>A snake venom metalloproteinase that inhibited cell proliferation and induced morphological changes of ECV304 cells.</title>
        <authorList>
            <person name="Wan S.-G."/>
            <person name="Jin Y."/>
            <person name="Lee W.-H."/>
            <person name="Zhang Y."/>
        </authorList>
    </citation>
    <scope>NUCLEOTIDE SEQUENCE [MRNA]</scope>
    <scope>PARTIAL PROTEIN SEQUENCE</scope>
    <scope>PYROGLUTAMATE FORMATION AT GLN-192</scope>
    <scope>FUNCTION</scope>
    <scope>ACTIVITY REGULATION</scope>
    <scope>SUBUNIT</scope>
    <scope>IDENTIFICATION BY MASS SPECTROMETRY</scope>
    <source>
        <tissue>Venom</tissue>
        <tissue>Venom gland</tissue>
    </source>
</reference>
<reference key="2">
    <citation type="journal article" date="2008" name="Biochimie">
        <title>P-III hemorrhagic metalloproteinases from Russell's viper venom: cloning, characterization, phylogenetic and functional site analyses.</title>
        <authorList>
            <person name="Chen H.-S."/>
            <person name="Tsai H.-Y."/>
            <person name="Wang Y.-M."/>
            <person name="Tsai I.-H."/>
        </authorList>
    </citation>
    <scope>BIOPHYSICOCHEMICAL PROPERTIES</scope>
    <source>
        <tissue>Venom</tissue>
    </source>
</reference>
<accession>Q2LD49</accession>
<sequence>MIQVLLVTICLAVFPYQGSSIILESGNVNDYEVVYPRKVTSLPKGAVQQKYEDAMQYELKVNGEPVVLHLEKNKGLFSKDYSETHYSPDGRKITTKPPVKDHCYYHGHIQNDADSTASISACNGLKGHFKLQGEMYLIEPLKLPDSEAHAVFKYENVEKEDEAPKMCGVTETNWESDEPIKEASQSNLTPEQQSYLNAPKYVKFFLVADHIMYLKYGRNLTTLRTRIFDTVNVVYLILLRINIHVLLVGMEIWSHKDKIIVQSVPAVTLKLFATWREADLLKHKSHGCAHLLTGINFNGPTAGLAYLGAICNPMYSAGIVQDHNKIHHLVAIAMAHELGHNLGINHDKDTCTCRAKACVMAGTISCDASYLFSDCSRQEHREFLIKNMPQCILKKPLKTDVVSPPVCGNYFVEVGEDCDCGSPATCRDSCCNPTNCKLRQGAQCAEGLCCDQCRFKGAGTECRPASSECDMADLCTGRSAECTDRFQRNGQPCQNNNGYCYNGTCPSMTDQCIALFGPNAAVSQDACFQFNREGNHYGYCRKEQNTKIACEPENVKCGRLYCIDSSPANKNPCNIVYLPNDEEKGMVLAGTKCADGRACNSNGQCVGVNGAYKSTTGFSQI</sequence>